<sequence>MIRVGIVGASGYVGLELTRILLKHPEVEKLYLFSDHFEDSWIFESEKIFVSDRSSYTELYKNLDVVFFALGSGETLKFLNDNQIPERFIDMSADFRFKNPGEYERVYGIKHSMPELLEKVVYGLPEVFREKIRDAKYIANPGCYPTASLLGLFPLIKNNLTYGNAIIDAKSGISGAGRKPTDKSIYGNIAENYQAYSILNHRHQPEIENIVKEMGYLRVLFIPQLIPVFRGIFASIYVPLREDITSDELYLLFKEVYKDEYFIKILPPSCSPEIKKVRGTNWAVISAQVDKNTRNAVIFVAIDNLIKGAAGQAVQNMNIMFGYDENLGLDFLPLYP</sequence>
<comment type="function">
    <text evidence="1">Catalyzes the NADPH-dependent reduction of N-acetyl-5-glutamyl phosphate to yield N-acetyl-L-glutamate 5-semialdehyde.</text>
</comment>
<comment type="catalytic activity">
    <reaction evidence="1">
        <text>N-acetyl-L-glutamate 5-semialdehyde + phosphate + NADP(+) = N-acetyl-L-glutamyl 5-phosphate + NADPH + H(+)</text>
        <dbReference type="Rhea" id="RHEA:21588"/>
        <dbReference type="ChEBI" id="CHEBI:15378"/>
        <dbReference type="ChEBI" id="CHEBI:29123"/>
        <dbReference type="ChEBI" id="CHEBI:43474"/>
        <dbReference type="ChEBI" id="CHEBI:57783"/>
        <dbReference type="ChEBI" id="CHEBI:57936"/>
        <dbReference type="ChEBI" id="CHEBI:58349"/>
        <dbReference type="EC" id="1.2.1.38"/>
    </reaction>
</comment>
<comment type="pathway">
    <text evidence="1">Amino-acid biosynthesis; L-arginine biosynthesis; N(2)-acetyl-L-ornithine from L-glutamate: step 3/4.</text>
</comment>
<comment type="subcellular location">
    <subcellularLocation>
        <location evidence="1">Cytoplasm</location>
    </subcellularLocation>
</comment>
<comment type="similarity">
    <text evidence="1">Belongs to the NAGSA dehydrogenase family. Type 1 subfamily.</text>
</comment>
<gene>
    <name evidence="1" type="primary">argC</name>
    <name type="ordered locus">DICTH_1676</name>
</gene>
<reference key="1">
    <citation type="journal article" date="2014" name="Genome Announc.">
        <title>Complete Genome Sequence of the Extreme Thermophile Dictyoglomus thermophilum H-6-12.</title>
        <authorList>
            <person name="Coil D.A."/>
            <person name="Badger J.H."/>
            <person name="Forberger H.C."/>
            <person name="Riggs F."/>
            <person name="Madupu R."/>
            <person name="Fedorova N."/>
            <person name="Ward N."/>
            <person name="Robb F.T."/>
            <person name="Eisen J.A."/>
        </authorList>
    </citation>
    <scope>NUCLEOTIDE SEQUENCE [LARGE SCALE GENOMIC DNA]</scope>
    <source>
        <strain>ATCC 35947 / DSM 3960 / H-6-12</strain>
    </source>
</reference>
<dbReference type="EC" id="1.2.1.38" evidence="1"/>
<dbReference type="EMBL" id="CP001146">
    <property type="protein sequence ID" value="ACI18888.1"/>
    <property type="molecule type" value="Genomic_DNA"/>
</dbReference>
<dbReference type="RefSeq" id="WP_012547520.1">
    <property type="nucleotide sequence ID" value="NC_011297.1"/>
</dbReference>
<dbReference type="SMR" id="B5YAL8"/>
<dbReference type="STRING" id="309799.DICTH_1676"/>
<dbReference type="PaxDb" id="309799-DICTH_1676"/>
<dbReference type="KEGG" id="dth:DICTH_1676"/>
<dbReference type="eggNOG" id="COG0002">
    <property type="taxonomic scope" value="Bacteria"/>
</dbReference>
<dbReference type="HOGENOM" id="CLU_006384_0_1_0"/>
<dbReference type="OrthoDB" id="9801289at2"/>
<dbReference type="UniPathway" id="UPA00068">
    <property type="reaction ID" value="UER00108"/>
</dbReference>
<dbReference type="Proteomes" id="UP000001733">
    <property type="component" value="Chromosome"/>
</dbReference>
<dbReference type="GO" id="GO:0005737">
    <property type="term" value="C:cytoplasm"/>
    <property type="evidence" value="ECO:0007669"/>
    <property type="project" value="UniProtKB-SubCell"/>
</dbReference>
<dbReference type="GO" id="GO:0003942">
    <property type="term" value="F:N-acetyl-gamma-glutamyl-phosphate reductase activity"/>
    <property type="evidence" value="ECO:0007669"/>
    <property type="project" value="UniProtKB-UniRule"/>
</dbReference>
<dbReference type="GO" id="GO:0051287">
    <property type="term" value="F:NAD binding"/>
    <property type="evidence" value="ECO:0007669"/>
    <property type="project" value="InterPro"/>
</dbReference>
<dbReference type="GO" id="GO:0070401">
    <property type="term" value="F:NADP+ binding"/>
    <property type="evidence" value="ECO:0007669"/>
    <property type="project" value="InterPro"/>
</dbReference>
<dbReference type="GO" id="GO:0006526">
    <property type="term" value="P:L-arginine biosynthetic process"/>
    <property type="evidence" value="ECO:0007669"/>
    <property type="project" value="UniProtKB-UniRule"/>
</dbReference>
<dbReference type="CDD" id="cd23934">
    <property type="entry name" value="AGPR_1_C"/>
    <property type="match status" value="1"/>
</dbReference>
<dbReference type="CDD" id="cd17895">
    <property type="entry name" value="AGPR_1_N"/>
    <property type="match status" value="1"/>
</dbReference>
<dbReference type="Gene3D" id="3.30.360.10">
    <property type="entry name" value="Dihydrodipicolinate Reductase, domain 2"/>
    <property type="match status" value="1"/>
</dbReference>
<dbReference type="Gene3D" id="3.40.50.720">
    <property type="entry name" value="NAD(P)-binding Rossmann-like Domain"/>
    <property type="match status" value="1"/>
</dbReference>
<dbReference type="HAMAP" id="MF_00150">
    <property type="entry name" value="ArgC_type1"/>
    <property type="match status" value="1"/>
</dbReference>
<dbReference type="InterPro" id="IPR023013">
    <property type="entry name" value="AGPR_AS"/>
</dbReference>
<dbReference type="InterPro" id="IPR000706">
    <property type="entry name" value="AGPR_type-1"/>
</dbReference>
<dbReference type="InterPro" id="IPR036291">
    <property type="entry name" value="NAD(P)-bd_dom_sf"/>
</dbReference>
<dbReference type="InterPro" id="IPR050085">
    <property type="entry name" value="NAGSA_dehydrogenase"/>
</dbReference>
<dbReference type="InterPro" id="IPR000534">
    <property type="entry name" value="Semialdehyde_DH_NAD-bd"/>
</dbReference>
<dbReference type="NCBIfam" id="TIGR01850">
    <property type="entry name" value="argC"/>
    <property type="match status" value="1"/>
</dbReference>
<dbReference type="PANTHER" id="PTHR32338:SF10">
    <property type="entry name" value="N-ACETYL-GAMMA-GLUTAMYL-PHOSPHATE REDUCTASE, CHLOROPLASTIC-RELATED"/>
    <property type="match status" value="1"/>
</dbReference>
<dbReference type="PANTHER" id="PTHR32338">
    <property type="entry name" value="N-ACETYL-GAMMA-GLUTAMYL-PHOSPHATE REDUCTASE, CHLOROPLASTIC-RELATED-RELATED"/>
    <property type="match status" value="1"/>
</dbReference>
<dbReference type="Pfam" id="PF01118">
    <property type="entry name" value="Semialdhyde_dh"/>
    <property type="match status" value="1"/>
</dbReference>
<dbReference type="Pfam" id="PF22698">
    <property type="entry name" value="Semialdhyde_dhC_1"/>
    <property type="match status" value="1"/>
</dbReference>
<dbReference type="SMART" id="SM00859">
    <property type="entry name" value="Semialdhyde_dh"/>
    <property type="match status" value="1"/>
</dbReference>
<dbReference type="SUPFAM" id="SSF55347">
    <property type="entry name" value="Glyceraldehyde-3-phosphate dehydrogenase-like, C-terminal domain"/>
    <property type="match status" value="1"/>
</dbReference>
<dbReference type="SUPFAM" id="SSF51735">
    <property type="entry name" value="NAD(P)-binding Rossmann-fold domains"/>
    <property type="match status" value="1"/>
</dbReference>
<dbReference type="PROSITE" id="PS01224">
    <property type="entry name" value="ARGC"/>
    <property type="match status" value="1"/>
</dbReference>
<evidence type="ECO:0000255" key="1">
    <source>
        <dbReference type="HAMAP-Rule" id="MF_00150"/>
    </source>
</evidence>
<keyword id="KW-0028">Amino-acid biosynthesis</keyword>
<keyword id="KW-0055">Arginine biosynthesis</keyword>
<keyword id="KW-0963">Cytoplasm</keyword>
<keyword id="KW-0521">NADP</keyword>
<keyword id="KW-0560">Oxidoreductase</keyword>
<protein>
    <recommendedName>
        <fullName evidence="1">N-acetyl-gamma-glutamyl-phosphate reductase</fullName>
        <shortName evidence="1">AGPR</shortName>
        <ecNumber evidence="1">1.2.1.38</ecNumber>
    </recommendedName>
    <alternativeName>
        <fullName evidence="1">N-acetyl-glutamate semialdehyde dehydrogenase</fullName>
        <shortName evidence="1">NAGSA dehydrogenase</shortName>
    </alternativeName>
</protein>
<name>ARGC_DICT6</name>
<organism>
    <name type="scientific">Dictyoglomus thermophilum (strain ATCC 35947 / DSM 3960 / H-6-12)</name>
    <dbReference type="NCBI Taxonomy" id="309799"/>
    <lineage>
        <taxon>Bacteria</taxon>
        <taxon>Pseudomonadati</taxon>
        <taxon>Dictyoglomota</taxon>
        <taxon>Dictyoglomia</taxon>
        <taxon>Dictyoglomales</taxon>
        <taxon>Dictyoglomaceae</taxon>
        <taxon>Dictyoglomus</taxon>
    </lineage>
</organism>
<accession>B5YAL8</accession>
<feature type="chain" id="PRO_1000096723" description="N-acetyl-gamma-glutamyl-phosphate reductase">
    <location>
        <begin position="1"/>
        <end position="336"/>
    </location>
</feature>
<feature type="active site" evidence="1">
    <location>
        <position position="143"/>
    </location>
</feature>
<proteinExistence type="inferred from homology"/>